<protein>
    <recommendedName>
        <fullName evidence="1">dTTP/UTP pyrophosphatase</fullName>
        <shortName evidence="1">dTTPase/UTPase</shortName>
        <ecNumber evidence="1">3.6.1.9</ecNumber>
    </recommendedName>
    <alternativeName>
        <fullName evidence="1">Nucleoside triphosphate pyrophosphatase</fullName>
    </alternativeName>
    <alternativeName>
        <fullName evidence="1">Nucleotide pyrophosphatase</fullName>
        <shortName evidence="1">Nucleotide PPase</shortName>
    </alternativeName>
</protein>
<feature type="chain" id="PRO_1000211767" description="dTTP/UTP pyrophosphatase">
    <location>
        <begin position="1"/>
        <end position="193"/>
    </location>
</feature>
<feature type="active site" description="Proton acceptor" evidence="1">
    <location>
        <position position="71"/>
    </location>
</feature>
<feature type="site" description="Important for substrate specificity" evidence="1">
    <location>
        <position position="13"/>
    </location>
</feature>
<feature type="site" description="Important for substrate specificity" evidence="1">
    <location>
        <position position="72"/>
    </location>
</feature>
<feature type="site" description="Important for substrate specificity" evidence="1">
    <location>
        <position position="156"/>
    </location>
</feature>
<keyword id="KW-0963">Cytoplasm</keyword>
<keyword id="KW-0378">Hydrolase</keyword>
<keyword id="KW-0546">Nucleotide metabolism</keyword>
<accession>B5YF11</accession>
<sequence length="193" mass="21629">MKKEIILASNSPRRIDLLKHMGVDFKVVSPNVEEEGNGEKRSPVEVVKKNAIMKVQKVAEDYRNAIIIGADTVVVIDGEIIGKPTNEKDARRILRKLRGRYHFVFSGVAVMETPEDKVLVSVVRSKVKMRDYSEEEIERYIATGEPMDKAGAYGIQGKGALLVEKIEGDYYNIVGLPLVRLNSLLNRLGYSLL</sequence>
<gene>
    <name type="ordered locus">DICTH_1299</name>
</gene>
<reference key="1">
    <citation type="journal article" date="2014" name="Genome Announc.">
        <title>Complete Genome Sequence of the Extreme Thermophile Dictyoglomus thermophilum H-6-12.</title>
        <authorList>
            <person name="Coil D.A."/>
            <person name="Badger J.H."/>
            <person name="Forberger H.C."/>
            <person name="Riggs F."/>
            <person name="Madupu R."/>
            <person name="Fedorova N."/>
            <person name="Ward N."/>
            <person name="Robb F.T."/>
            <person name="Eisen J.A."/>
        </authorList>
    </citation>
    <scope>NUCLEOTIDE SEQUENCE [LARGE SCALE GENOMIC DNA]</scope>
    <source>
        <strain>ATCC 35947 / DSM 3960 / H-6-12</strain>
    </source>
</reference>
<evidence type="ECO:0000255" key="1">
    <source>
        <dbReference type="HAMAP-Rule" id="MF_00528"/>
    </source>
</evidence>
<proteinExistence type="inferred from homology"/>
<dbReference type="EC" id="3.6.1.9" evidence="1"/>
<dbReference type="EMBL" id="CP001146">
    <property type="protein sequence ID" value="ACI19577.1"/>
    <property type="molecule type" value="Genomic_DNA"/>
</dbReference>
<dbReference type="RefSeq" id="WP_012548209.1">
    <property type="nucleotide sequence ID" value="NC_011297.1"/>
</dbReference>
<dbReference type="SMR" id="B5YF11"/>
<dbReference type="STRING" id="309799.DICTH_1299"/>
<dbReference type="PaxDb" id="309799-DICTH_1299"/>
<dbReference type="KEGG" id="dth:DICTH_1299"/>
<dbReference type="eggNOG" id="COG0424">
    <property type="taxonomic scope" value="Bacteria"/>
</dbReference>
<dbReference type="HOGENOM" id="CLU_040416_0_0_0"/>
<dbReference type="OrthoDB" id="9807767at2"/>
<dbReference type="Proteomes" id="UP000001733">
    <property type="component" value="Chromosome"/>
</dbReference>
<dbReference type="GO" id="GO:0005737">
    <property type="term" value="C:cytoplasm"/>
    <property type="evidence" value="ECO:0007669"/>
    <property type="project" value="UniProtKB-SubCell"/>
</dbReference>
<dbReference type="GO" id="GO:0036218">
    <property type="term" value="F:dTTP diphosphatase activity"/>
    <property type="evidence" value="ECO:0007669"/>
    <property type="project" value="RHEA"/>
</dbReference>
<dbReference type="GO" id="GO:0036221">
    <property type="term" value="F:UTP diphosphatase activity"/>
    <property type="evidence" value="ECO:0007669"/>
    <property type="project" value="RHEA"/>
</dbReference>
<dbReference type="GO" id="GO:0009117">
    <property type="term" value="P:nucleotide metabolic process"/>
    <property type="evidence" value="ECO:0007669"/>
    <property type="project" value="UniProtKB-KW"/>
</dbReference>
<dbReference type="CDD" id="cd00555">
    <property type="entry name" value="Maf"/>
    <property type="match status" value="1"/>
</dbReference>
<dbReference type="FunFam" id="3.90.950.10:FF:000005">
    <property type="entry name" value="7-methyl-GTP pyrophosphatase"/>
    <property type="match status" value="1"/>
</dbReference>
<dbReference type="Gene3D" id="3.90.950.10">
    <property type="match status" value="1"/>
</dbReference>
<dbReference type="HAMAP" id="MF_00528">
    <property type="entry name" value="Maf"/>
    <property type="match status" value="1"/>
</dbReference>
<dbReference type="InterPro" id="IPR029001">
    <property type="entry name" value="ITPase-like_fam"/>
</dbReference>
<dbReference type="InterPro" id="IPR003697">
    <property type="entry name" value="Maf-like"/>
</dbReference>
<dbReference type="NCBIfam" id="TIGR00172">
    <property type="entry name" value="maf"/>
    <property type="match status" value="1"/>
</dbReference>
<dbReference type="PANTHER" id="PTHR43213">
    <property type="entry name" value="BIFUNCTIONAL DTTP/UTP PYROPHOSPHATASE/METHYLTRANSFERASE PROTEIN-RELATED"/>
    <property type="match status" value="1"/>
</dbReference>
<dbReference type="PANTHER" id="PTHR43213:SF5">
    <property type="entry name" value="BIFUNCTIONAL DTTP_UTP PYROPHOSPHATASE_METHYLTRANSFERASE PROTEIN-RELATED"/>
    <property type="match status" value="1"/>
</dbReference>
<dbReference type="Pfam" id="PF02545">
    <property type="entry name" value="Maf"/>
    <property type="match status" value="1"/>
</dbReference>
<dbReference type="PIRSF" id="PIRSF006305">
    <property type="entry name" value="Maf"/>
    <property type="match status" value="1"/>
</dbReference>
<dbReference type="SUPFAM" id="SSF52972">
    <property type="entry name" value="ITPase-like"/>
    <property type="match status" value="1"/>
</dbReference>
<comment type="function">
    <text evidence="1">Nucleoside triphosphate pyrophosphatase that hydrolyzes dTTP and UTP. May have a dual role in cell division arrest and in preventing the incorporation of modified nucleotides into cellular nucleic acids.</text>
</comment>
<comment type="catalytic activity">
    <reaction evidence="1">
        <text>dTTP + H2O = dTMP + diphosphate + H(+)</text>
        <dbReference type="Rhea" id="RHEA:28534"/>
        <dbReference type="ChEBI" id="CHEBI:15377"/>
        <dbReference type="ChEBI" id="CHEBI:15378"/>
        <dbReference type="ChEBI" id="CHEBI:33019"/>
        <dbReference type="ChEBI" id="CHEBI:37568"/>
        <dbReference type="ChEBI" id="CHEBI:63528"/>
        <dbReference type="EC" id="3.6.1.9"/>
    </reaction>
</comment>
<comment type="catalytic activity">
    <reaction evidence="1">
        <text>UTP + H2O = UMP + diphosphate + H(+)</text>
        <dbReference type="Rhea" id="RHEA:29395"/>
        <dbReference type="ChEBI" id="CHEBI:15377"/>
        <dbReference type="ChEBI" id="CHEBI:15378"/>
        <dbReference type="ChEBI" id="CHEBI:33019"/>
        <dbReference type="ChEBI" id="CHEBI:46398"/>
        <dbReference type="ChEBI" id="CHEBI:57865"/>
        <dbReference type="EC" id="3.6.1.9"/>
    </reaction>
</comment>
<comment type="cofactor">
    <cofactor evidence="1">
        <name>a divalent metal cation</name>
        <dbReference type="ChEBI" id="CHEBI:60240"/>
    </cofactor>
</comment>
<comment type="subcellular location">
    <subcellularLocation>
        <location evidence="1">Cytoplasm</location>
    </subcellularLocation>
</comment>
<comment type="similarity">
    <text evidence="1">Belongs to the Maf family. YhdE subfamily.</text>
</comment>
<organism>
    <name type="scientific">Dictyoglomus thermophilum (strain ATCC 35947 / DSM 3960 / H-6-12)</name>
    <dbReference type="NCBI Taxonomy" id="309799"/>
    <lineage>
        <taxon>Bacteria</taxon>
        <taxon>Pseudomonadati</taxon>
        <taxon>Dictyoglomota</taxon>
        <taxon>Dictyoglomia</taxon>
        <taxon>Dictyoglomales</taxon>
        <taxon>Dictyoglomaceae</taxon>
        <taxon>Dictyoglomus</taxon>
    </lineage>
</organism>
<name>NTPPA_DICT6</name>